<sequence>MTVPATRKDLMIVNMGPHHPSMHGVLRLIVTLDGEDVIDCEPVLGYLHRGMEKIAENRTIIQYLPYVTRWDYLATMFTEAITVNAPEQLGNIQVPKRASYIRAIMLELSRIASHLLWLGPFMADIGAQTPFFYIFRERELIYDLFEAATGMRMMHNYFRIGGVAADLPHGWIDKCLDFCDYFLTGIAEYQKLITRNPIFLERVEGVGIIGGEEAINWGLSGPMLRASGIQWDLRKVDHYGCYDEFDWEVQWQKEGDSLARYLVRISEMTESVKIIQQALEGIPGGPYENLEVRRFDRARDSEWNDFEYRFISKKPSPTFELSKQELYVRVEAPKGELGIFLIGDQSVFPWRWKIRPPGFINLQILPQLVKRMKLADIMTILGSIDIIMGEVDR</sequence>
<organism>
    <name type="scientific">Platanus occidentalis</name>
    <name type="common">Sycamore</name>
    <name type="synonym">American plane tree</name>
    <dbReference type="NCBI Taxonomy" id="4403"/>
    <lineage>
        <taxon>Eukaryota</taxon>
        <taxon>Viridiplantae</taxon>
        <taxon>Streptophyta</taxon>
        <taxon>Embryophyta</taxon>
        <taxon>Tracheophyta</taxon>
        <taxon>Spermatophyta</taxon>
        <taxon>Magnoliopsida</taxon>
        <taxon>Proteales</taxon>
        <taxon>Platanaceae</taxon>
        <taxon>Platanus</taxon>
    </lineage>
</organism>
<comment type="function">
    <text evidence="1">NDH shuttles electrons from NAD(P)H:plastoquinone, via FMN and iron-sulfur (Fe-S) centers, to quinones in the photosynthetic chain and possibly in a chloroplast respiratory chain. The immediate electron acceptor for the enzyme in this species is believed to be plastoquinone. Couples the redox reaction to proton translocation, and thus conserves the redox energy in a proton gradient.</text>
</comment>
<comment type="catalytic activity">
    <reaction evidence="1">
        <text>a plastoquinone + NADH + (n+1) H(+)(in) = a plastoquinol + NAD(+) + n H(+)(out)</text>
        <dbReference type="Rhea" id="RHEA:42608"/>
        <dbReference type="Rhea" id="RHEA-COMP:9561"/>
        <dbReference type="Rhea" id="RHEA-COMP:9562"/>
        <dbReference type="ChEBI" id="CHEBI:15378"/>
        <dbReference type="ChEBI" id="CHEBI:17757"/>
        <dbReference type="ChEBI" id="CHEBI:57540"/>
        <dbReference type="ChEBI" id="CHEBI:57945"/>
        <dbReference type="ChEBI" id="CHEBI:62192"/>
    </reaction>
</comment>
<comment type="catalytic activity">
    <reaction evidence="1">
        <text>a plastoquinone + NADPH + (n+1) H(+)(in) = a plastoquinol + NADP(+) + n H(+)(out)</text>
        <dbReference type="Rhea" id="RHEA:42612"/>
        <dbReference type="Rhea" id="RHEA-COMP:9561"/>
        <dbReference type="Rhea" id="RHEA-COMP:9562"/>
        <dbReference type="ChEBI" id="CHEBI:15378"/>
        <dbReference type="ChEBI" id="CHEBI:17757"/>
        <dbReference type="ChEBI" id="CHEBI:57783"/>
        <dbReference type="ChEBI" id="CHEBI:58349"/>
        <dbReference type="ChEBI" id="CHEBI:62192"/>
    </reaction>
</comment>
<comment type="subunit">
    <text evidence="1">NDH is composed of at least 16 different subunits, 5 of which are encoded in the nucleus.</text>
</comment>
<comment type="subcellular location">
    <subcellularLocation>
        <location evidence="1">Plastid</location>
        <location evidence="1">Chloroplast thylakoid membrane</location>
        <topology evidence="1">Peripheral membrane protein</topology>
        <orientation evidence="1">Stromal side</orientation>
    </subcellularLocation>
</comment>
<comment type="similarity">
    <text evidence="1">Belongs to the complex I 49 kDa subunit family.</text>
</comment>
<protein>
    <recommendedName>
        <fullName evidence="1">NAD(P)H-quinone oxidoreductase subunit H, chloroplastic</fullName>
        <ecNumber evidence="1">7.1.1.-</ecNumber>
    </recommendedName>
    <alternativeName>
        <fullName>NAD(P)H dehydrogenase subunit H</fullName>
    </alternativeName>
    <alternativeName>
        <fullName evidence="1">NADH-plastoquinone oxidoreductase 49 kDa subunit</fullName>
    </alternativeName>
    <alternativeName>
        <fullName evidence="1">NADH-plastoquinone oxidoreductase subunit H</fullName>
    </alternativeName>
</protein>
<proteinExistence type="inferred from homology"/>
<evidence type="ECO:0000255" key="1">
    <source>
        <dbReference type="HAMAP-Rule" id="MF_01358"/>
    </source>
</evidence>
<accession>Q09FZ0</accession>
<keyword id="KW-0150">Chloroplast</keyword>
<keyword id="KW-0472">Membrane</keyword>
<keyword id="KW-0520">NAD</keyword>
<keyword id="KW-0521">NADP</keyword>
<keyword id="KW-0934">Plastid</keyword>
<keyword id="KW-0618">Plastoquinone</keyword>
<keyword id="KW-0874">Quinone</keyword>
<keyword id="KW-0793">Thylakoid</keyword>
<keyword id="KW-1278">Translocase</keyword>
<keyword id="KW-0813">Transport</keyword>
<geneLocation type="chloroplast"/>
<name>NDHH_PLAOC</name>
<feature type="chain" id="PRO_0000358022" description="NAD(P)H-quinone oxidoreductase subunit H, chloroplastic">
    <location>
        <begin position="1"/>
        <end position="393"/>
    </location>
</feature>
<reference key="1">
    <citation type="journal article" date="2006" name="BMC Plant Biol.">
        <title>Rapid and accurate pyrosequencing of angiosperm plastid genomes.</title>
        <authorList>
            <person name="Moore M.J."/>
            <person name="Dhingra A."/>
            <person name="Soltis P.S."/>
            <person name="Shaw R."/>
            <person name="Farmerie W.G."/>
            <person name="Folta K.M."/>
            <person name="Soltis D.E."/>
        </authorList>
    </citation>
    <scope>NUCLEOTIDE SEQUENCE [LARGE SCALE GENOMIC DNA]</scope>
</reference>
<gene>
    <name evidence="1" type="primary">ndhH</name>
</gene>
<dbReference type="EC" id="7.1.1.-" evidence="1"/>
<dbReference type="EMBL" id="DQ923116">
    <property type="protein sequence ID" value="ABI49835.1"/>
    <property type="molecule type" value="Genomic_DNA"/>
</dbReference>
<dbReference type="RefSeq" id="YP_740621.1">
    <property type="nucleotide sequence ID" value="NC_008335.1"/>
</dbReference>
<dbReference type="SMR" id="Q09FZ0"/>
<dbReference type="GeneID" id="4271360"/>
<dbReference type="GO" id="GO:0009535">
    <property type="term" value="C:chloroplast thylakoid membrane"/>
    <property type="evidence" value="ECO:0007669"/>
    <property type="project" value="UniProtKB-SubCell"/>
</dbReference>
<dbReference type="GO" id="GO:0051287">
    <property type="term" value="F:NAD binding"/>
    <property type="evidence" value="ECO:0007669"/>
    <property type="project" value="InterPro"/>
</dbReference>
<dbReference type="GO" id="GO:0016655">
    <property type="term" value="F:oxidoreductase activity, acting on NAD(P)H, quinone or similar compound as acceptor"/>
    <property type="evidence" value="ECO:0007669"/>
    <property type="project" value="UniProtKB-UniRule"/>
</dbReference>
<dbReference type="GO" id="GO:0048038">
    <property type="term" value="F:quinone binding"/>
    <property type="evidence" value="ECO:0007669"/>
    <property type="project" value="UniProtKB-KW"/>
</dbReference>
<dbReference type="GO" id="GO:0019684">
    <property type="term" value="P:photosynthesis, light reaction"/>
    <property type="evidence" value="ECO:0007669"/>
    <property type="project" value="UniProtKB-UniRule"/>
</dbReference>
<dbReference type="FunFam" id="1.10.645.10:FF:000003">
    <property type="entry name" value="NAD(P)H-quinone oxidoreductase subunit H, chloroplastic"/>
    <property type="match status" value="1"/>
</dbReference>
<dbReference type="Gene3D" id="1.10.645.10">
    <property type="entry name" value="Cytochrome-c3 Hydrogenase, chain B"/>
    <property type="match status" value="1"/>
</dbReference>
<dbReference type="HAMAP" id="MF_01358">
    <property type="entry name" value="NDH1_NuoD"/>
    <property type="match status" value="1"/>
</dbReference>
<dbReference type="InterPro" id="IPR001135">
    <property type="entry name" value="NADH_Q_OxRdtase_suD"/>
</dbReference>
<dbReference type="InterPro" id="IPR014029">
    <property type="entry name" value="NADH_UbQ_OxRdtase_49kDa_CS"/>
</dbReference>
<dbReference type="InterPro" id="IPR022885">
    <property type="entry name" value="NDH1_su_D/H"/>
</dbReference>
<dbReference type="InterPro" id="IPR029014">
    <property type="entry name" value="NiFe-Hase_large"/>
</dbReference>
<dbReference type="NCBIfam" id="NF004739">
    <property type="entry name" value="PRK06075.1"/>
    <property type="match status" value="1"/>
</dbReference>
<dbReference type="NCBIfam" id="NF005649">
    <property type="entry name" value="PRK07415.1"/>
    <property type="match status" value="1"/>
</dbReference>
<dbReference type="PANTHER" id="PTHR11993:SF10">
    <property type="entry name" value="NADH DEHYDROGENASE [UBIQUINONE] IRON-SULFUR PROTEIN 2, MITOCHONDRIAL"/>
    <property type="match status" value="1"/>
</dbReference>
<dbReference type="PANTHER" id="PTHR11993">
    <property type="entry name" value="NADH-UBIQUINONE OXIDOREDUCTASE 49 KDA SUBUNIT"/>
    <property type="match status" value="1"/>
</dbReference>
<dbReference type="Pfam" id="PF00346">
    <property type="entry name" value="Complex1_49kDa"/>
    <property type="match status" value="1"/>
</dbReference>
<dbReference type="SUPFAM" id="SSF56762">
    <property type="entry name" value="HydB/Nqo4-like"/>
    <property type="match status" value="1"/>
</dbReference>
<dbReference type="PROSITE" id="PS00535">
    <property type="entry name" value="COMPLEX1_49K"/>
    <property type="match status" value="1"/>
</dbReference>